<name>RPO10_METAC</name>
<keyword id="KW-0963">Cytoplasm</keyword>
<keyword id="KW-0240">DNA-directed RNA polymerase</keyword>
<keyword id="KW-0479">Metal-binding</keyword>
<keyword id="KW-0548">Nucleotidyltransferase</keyword>
<keyword id="KW-1185">Reference proteome</keyword>
<keyword id="KW-0804">Transcription</keyword>
<keyword id="KW-0808">Transferase</keyword>
<keyword id="KW-0862">Zinc</keyword>
<feature type="chain" id="PRO_0000121348" description="DNA-directed RNA polymerase subunit Rpo10">
    <location>
        <begin position="1"/>
        <end position="62"/>
    </location>
</feature>
<feature type="binding site" evidence="1">
    <location>
        <position position="6"/>
    </location>
    <ligand>
        <name>Zn(2+)</name>
        <dbReference type="ChEBI" id="CHEBI:29105"/>
    </ligand>
</feature>
<feature type="binding site" evidence="1">
    <location>
        <position position="9"/>
    </location>
    <ligand>
        <name>Zn(2+)</name>
        <dbReference type="ChEBI" id="CHEBI:29105"/>
    </ligand>
</feature>
<feature type="binding site" evidence="1">
    <location>
        <position position="43"/>
    </location>
    <ligand>
        <name>Zn(2+)</name>
        <dbReference type="ChEBI" id="CHEBI:29105"/>
    </ligand>
</feature>
<feature type="binding site" evidence="1">
    <location>
        <position position="44"/>
    </location>
    <ligand>
        <name>Zn(2+)</name>
        <dbReference type="ChEBI" id="CHEBI:29105"/>
    </ligand>
</feature>
<sequence>MIPVRCFSCGKVISNYWDEYKRRVTDGEGSAAVLDDLGITRYCCRRMFLSHVELVDVLSPYQ</sequence>
<reference key="1">
    <citation type="journal article" date="2002" name="Genome Res.">
        <title>The genome of Methanosarcina acetivorans reveals extensive metabolic and physiological diversity.</title>
        <authorList>
            <person name="Galagan J.E."/>
            <person name="Nusbaum C."/>
            <person name="Roy A."/>
            <person name="Endrizzi M.G."/>
            <person name="Macdonald P."/>
            <person name="FitzHugh W."/>
            <person name="Calvo S."/>
            <person name="Engels R."/>
            <person name="Smirnov S."/>
            <person name="Atnoor D."/>
            <person name="Brown A."/>
            <person name="Allen N."/>
            <person name="Naylor J."/>
            <person name="Stange-Thomann N."/>
            <person name="DeArellano K."/>
            <person name="Johnson R."/>
            <person name="Linton L."/>
            <person name="McEwan P."/>
            <person name="McKernan K."/>
            <person name="Talamas J."/>
            <person name="Tirrell A."/>
            <person name="Ye W."/>
            <person name="Zimmer A."/>
            <person name="Barber R.D."/>
            <person name="Cann I."/>
            <person name="Graham D.E."/>
            <person name="Grahame D.A."/>
            <person name="Guss A.M."/>
            <person name="Hedderich R."/>
            <person name="Ingram-Smith C."/>
            <person name="Kuettner H.C."/>
            <person name="Krzycki J.A."/>
            <person name="Leigh J.A."/>
            <person name="Li W."/>
            <person name="Liu J."/>
            <person name="Mukhopadhyay B."/>
            <person name="Reeve J.N."/>
            <person name="Smith K."/>
            <person name="Springer T.A."/>
            <person name="Umayam L.A."/>
            <person name="White O."/>
            <person name="White R.H."/>
            <person name="de Macario E.C."/>
            <person name="Ferry J.G."/>
            <person name="Jarrell K.F."/>
            <person name="Jing H."/>
            <person name="Macario A.J.L."/>
            <person name="Paulsen I.T."/>
            <person name="Pritchett M."/>
            <person name="Sowers K.R."/>
            <person name="Swanson R.V."/>
            <person name="Zinder S.H."/>
            <person name="Lander E."/>
            <person name="Metcalf W.W."/>
            <person name="Birren B."/>
        </authorList>
    </citation>
    <scope>NUCLEOTIDE SEQUENCE [LARGE SCALE GENOMIC DNA]</scope>
    <source>
        <strain>ATCC 35395 / DSM 2834 / JCM 12185 / C2A</strain>
    </source>
</reference>
<dbReference type="EC" id="2.7.7.6" evidence="1"/>
<dbReference type="EMBL" id="AE010299">
    <property type="protein sequence ID" value="AAM04042.1"/>
    <property type="molecule type" value="Genomic_DNA"/>
</dbReference>
<dbReference type="RefSeq" id="WP_011020647.1">
    <property type="nucleotide sequence ID" value="NC_003552.1"/>
</dbReference>
<dbReference type="SMR" id="Q8TT41"/>
<dbReference type="FunCoup" id="Q8TT41">
    <property type="interactions" value="73"/>
</dbReference>
<dbReference type="STRING" id="188937.MA_0598"/>
<dbReference type="EnsemblBacteria" id="AAM04042">
    <property type="protein sequence ID" value="AAM04042"/>
    <property type="gene ID" value="MA_0598"/>
</dbReference>
<dbReference type="GeneID" id="1472490"/>
<dbReference type="KEGG" id="mac:MA_0598"/>
<dbReference type="HOGENOM" id="CLU_143122_2_1_2"/>
<dbReference type="InParanoid" id="Q8TT41"/>
<dbReference type="OrthoDB" id="371754at2157"/>
<dbReference type="PhylomeDB" id="Q8TT41"/>
<dbReference type="Proteomes" id="UP000002487">
    <property type="component" value="Chromosome"/>
</dbReference>
<dbReference type="GO" id="GO:0005737">
    <property type="term" value="C:cytoplasm"/>
    <property type="evidence" value="ECO:0007669"/>
    <property type="project" value="UniProtKB-SubCell"/>
</dbReference>
<dbReference type="GO" id="GO:0000428">
    <property type="term" value="C:DNA-directed RNA polymerase complex"/>
    <property type="evidence" value="ECO:0007669"/>
    <property type="project" value="UniProtKB-KW"/>
</dbReference>
<dbReference type="GO" id="GO:0003677">
    <property type="term" value="F:DNA binding"/>
    <property type="evidence" value="ECO:0007669"/>
    <property type="project" value="InterPro"/>
</dbReference>
<dbReference type="GO" id="GO:0003899">
    <property type="term" value="F:DNA-directed RNA polymerase activity"/>
    <property type="evidence" value="ECO:0007669"/>
    <property type="project" value="UniProtKB-UniRule"/>
</dbReference>
<dbReference type="GO" id="GO:0008270">
    <property type="term" value="F:zinc ion binding"/>
    <property type="evidence" value="ECO:0000318"/>
    <property type="project" value="GO_Central"/>
</dbReference>
<dbReference type="GO" id="GO:0006351">
    <property type="term" value="P:DNA-templated transcription"/>
    <property type="evidence" value="ECO:0007669"/>
    <property type="project" value="UniProtKB-UniRule"/>
</dbReference>
<dbReference type="FunFam" id="1.10.10.60:FF:000335">
    <property type="entry name" value="DNA-directed RNA polymerase subunit N, putative"/>
    <property type="match status" value="1"/>
</dbReference>
<dbReference type="Gene3D" id="1.10.10.60">
    <property type="entry name" value="Homeodomain-like"/>
    <property type="match status" value="1"/>
</dbReference>
<dbReference type="HAMAP" id="MF_00250">
    <property type="entry name" value="RNApol_arch_Rpo10"/>
    <property type="match status" value="1"/>
</dbReference>
<dbReference type="InterPro" id="IPR023580">
    <property type="entry name" value="RNA_pol_su_RPB10"/>
</dbReference>
<dbReference type="InterPro" id="IPR020789">
    <property type="entry name" value="RNA_pol_suN_Zn-BS"/>
</dbReference>
<dbReference type="InterPro" id="IPR000268">
    <property type="entry name" value="RPABC5/Rpb10"/>
</dbReference>
<dbReference type="NCBIfam" id="NF003089">
    <property type="entry name" value="PRK04016.1"/>
    <property type="match status" value="1"/>
</dbReference>
<dbReference type="PANTHER" id="PTHR23431:SF3">
    <property type="entry name" value="DNA-DIRECTED RNA POLYMERASES I, II, AND III SUBUNIT RPABC5"/>
    <property type="match status" value="1"/>
</dbReference>
<dbReference type="PANTHER" id="PTHR23431">
    <property type="entry name" value="DNA-DIRECTED RNA POLYMERASES I, II, AND III SUBUNIT RPABC5 FAMILY MEMBER"/>
    <property type="match status" value="1"/>
</dbReference>
<dbReference type="Pfam" id="PF01194">
    <property type="entry name" value="RNA_pol_N"/>
    <property type="match status" value="1"/>
</dbReference>
<dbReference type="PIRSF" id="PIRSF005653">
    <property type="entry name" value="RNA_pol_N/8_sub"/>
    <property type="match status" value="1"/>
</dbReference>
<dbReference type="SUPFAM" id="SSF46924">
    <property type="entry name" value="RNA polymerase subunit RPB10"/>
    <property type="match status" value="1"/>
</dbReference>
<dbReference type="PROSITE" id="PS01112">
    <property type="entry name" value="RNA_POL_N_8KD"/>
    <property type="match status" value="1"/>
</dbReference>
<proteinExistence type="inferred from homology"/>
<protein>
    <recommendedName>
        <fullName evidence="1">DNA-directed RNA polymerase subunit Rpo10</fullName>
        <ecNumber evidence="1">2.7.7.6</ecNumber>
    </recommendedName>
    <alternativeName>
        <fullName evidence="1">DNA-directed RNA polymerase subunit N</fullName>
    </alternativeName>
</protein>
<comment type="function">
    <text evidence="1">DNA-dependent RNA polymerase (RNAP) catalyzes the transcription of DNA into RNA using the four ribonucleoside triphosphates as substrates.</text>
</comment>
<comment type="catalytic activity">
    <reaction evidence="1">
        <text>RNA(n) + a ribonucleoside 5'-triphosphate = RNA(n+1) + diphosphate</text>
        <dbReference type="Rhea" id="RHEA:21248"/>
        <dbReference type="Rhea" id="RHEA-COMP:14527"/>
        <dbReference type="Rhea" id="RHEA-COMP:17342"/>
        <dbReference type="ChEBI" id="CHEBI:33019"/>
        <dbReference type="ChEBI" id="CHEBI:61557"/>
        <dbReference type="ChEBI" id="CHEBI:140395"/>
        <dbReference type="EC" id="2.7.7.6"/>
    </reaction>
</comment>
<comment type="cofactor">
    <cofactor evidence="1">
        <name>Zn(2+)</name>
        <dbReference type="ChEBI" id="CHEBI:29105"/>
    </cofactor>
    <text evidence="1">Binds 1 zinc ion.</text>
</comment>
<comment type="subunit">
    <text evidence="1">Part of the RNA polymerase complex.</text>
</comment>
<comment type="subcellular location">
    <subcellularLocation>
        <location evidence="1">Cytoplasm</location>
    </subcellularLocation>
</comment>
<comment type="similarity">
    <text evidence="1">Belongs to the archaeal Rpo10/eukaryotic RPB10 RNA polymerase subunit family.</text>
</comment>
<accession>Q8TT41</accession>
<evidence type="ECO:0000255" key="1">
    <source>
        <dbReference type="HAMAP-Rule" id="MF_00250"/>
    </source>
</evidence>
<gene>
    <name evidence="1" type="primary">rpo10</name>
    <name evidence="1" type="synonym">rpoN</name>
    <name type="ordered locus">MA_0598</name>
</gene>
<organism>
    <name type="scientific">Methanosarcina acetivorans (strain ATCC 35395 / DSM 2834 / JCM 12185 / C2A)</name>
    <dbReference type="NCBI Taxonomy" id="188937"/>
    <lineage>
        <taxon>Archaea</taxon>
        <taxon>Methanobacteriati</taxon>
        <taxon>Methanobacteriota</taxon>
        <taxon>Stenosarchaea group</taxon>
        <taxon>Methanomicrobia</taxon>
        <taxon>Methanosarcinales</taxon>
        <taxon>Methanosarcinaceae</taxon>
        <taxon>Methanosarcina</taxon>
    </lineage>
</organism>